<protein>
    <recommendedName>
        <fullName evidence="7">Acyl-CoA-binding domain-containing protein 2</fullName>
        <shortName evidence="6">Acyl-CoA binding protein 2</shortName>
        <shortName evidence="6">OsACBP2</shortName>
    </recommendedName>
</protein>
<feature type="chain" id="PRO_0000442032" description="Acyl-CoA-binding domain-containing protein 2">
    <location>
        <begin position="1"/>
        <end position="91"/>
    </location>
</feature>
<feature type="domain" description="ACB" evidence="2">
    <location>
        <begin position="3"/>
        <end position="88"/>
    </location>
</feature>
<feature type="binding site" evidence="1">
    <location>
        <position position="15"/>
    </location>
    <ligand>
        <name>an acyl-CoA</name>
        <dbReference type="ChEBI" id="CHEBI:58342"/>
    </ligand>
</feature>
<feature type="binding site" evidence="1">
    <location>
        <begin position="30"/>
        <end position="34"/>
    </location>
    <ligand>
        <name>an acyl-CoA</name>
        <dbReference type="ChEBI" id="CHEBI:58342"/>
    </ligand>
</feature>
<feature type="binding site" evidence="1">
    <location>
        <position position="52"/>
    </location>
    <ligand>
        <name>an acyl-CoA</name>
        <dbReference type="ChEBI" id="CHEBI:58342"/>
    </ligand>
</feature>
<feature type="binding site" evidence="1">
    <location>
        <position position="56"/>
    </location>
    <ligand>
        <name>an acyl-CoA</name>
        <dbReference type="ChEBI" id="CHEBI:58342"/>
    </ligand>
</feature>
<feature type="binding site" evidence="1">
    <location>
        <position position="75"/>
    </location>
    <ligand>
        <name>an acyl-CoA</name>
        <dbReference type="ChEBI" id="CHEBI:58342"/>
    </ligand>
</feature>
<feature type="helix" evidence="12">
    <location>
        <begin position="3"/>
        <end position="15"/>
    </location>
</feature>
<feature type="helix" evidence="12">
    <location>
        <begin position="23"/>
        <end position="37"/>
    </location>
</feature>
<feature type="helix" evidence="12">
    <location>
        <begin position="51"/>
        <end position="62"/>
    </location>
</feature>
<feature type="turn" evidence="12">
    <location>
        <begin position="63"/>
        <end position="65"/>
    </location>
</feature>
<feature type="helix" evidence="12">
    <location>
        <begin position="68"/>
        <end position="87"/>
    </location>
</feature>
<gene>
    <name evidence="6" type="primary">ACBP2</name>
    <name evidence="10" type="ordered locus">Os06g0115300</name>
    <name evidence="7" type="ordered locus">LOC_Os06g02490</name>
    <name evidence="11" type="ORF">OsJ_19900</name>
    <name evidence="9" type="ORF">OSJNBa0019F11.14</name>
    <name evidence="8" type="ORF">P0541H01.36</name>
</gene>
<name>ACBP2_ORYSJ</name>
<dbReference type="EMBL" id="AP001389">
    <property type="protein sequence ID" value="BAD67765.1"/>
    <property type="molecule type" value="Genomic_DNA"/>
</dbReference>
<dbReference type="EMBL" id="AP002837">
    <property type="protein sequence ID" value="BAD67905.1"/>
    <property type="molecule type" value="Genomic_DNA"/>
</dbReference>
<dbReference type="EMBL" id="AP008212">
    <property type="protein sequence ID" value="BAF18525.1"/>
    <property type="molecule type" value="Genomic_DNA"/>
</dbReference>
<dbReference type="EMBL" id="AP014962">
    <property type="protein sequence ID" value="BAS95836.1"/>
    <property type="molecule type" value="Genomic_DNA"/>
</dbReference>
<dbReference type="EMBL" id="CM000143">
    <property type="protein sequence ID" value="EAZ35610.1"/>
    <property type="molecule type" value="Genomic_DNA"/>
</dbReference>
<dbReference type="EMBL" id="AK058833">
    <property type="protein sequence ID" value="BAG86809.1"/>
    <property type="molecule type" value="mRNA"/>
</dbReference>
<dbReference type="RefSeq" id="XP_015641745.1">
    <property type="nucleotide sequence ID" value="XM_015786259.1"/>
</dbReference>
<dbReference type="PDB" id="5H3I">
    <property type="method" value="X-ray"/>
    <property type="resolution" value="2.30 A"/>
    <property type="chains" value="A/B/C/D=1-91"/>
</dbReference>
<dbReference type="PDB" id="6KF8">
    <property type="method" value="X-ray"/>
    <property type="resolution" value="3.60 A"/>
    <property type="chains" value="A/C/D/F/I/K=1-91"/>
</dbReference>
<dbReference type="PDBsum" id="5H3I"/>
<dbReference type="PDBsum" id="6KF8"/>
<dbReference type="SMR" id="Q5VRM0"/>
<dbReference type="FunCoup" id="Q5VRM0">
    <property type="interactions" value="1893"/>
</dbReference>
<dbReference type="STRING" id="39947.Q5VRM0"/>
<dbReference type="PaxDb" id="39947-Q5VRM0"/>
<dbReference type="EnsemblPlants" id="Os06t0115300-01">
    <property type="protein sequence ID" value="Os06t0115300-01"/>
    <property type="gene ID" value="Os06g0115300"/>
</dbReference>
<dbReference type="Gramene" id="Os06t0115300-01">
    <property type="protein sequence ID" value="Os06t0115300-01"/>
    <property type="gene ID" value="Os06g0115300"/>
</dbReference>
<dbReference type="KEGG" id="dosa:Os06g0115300"/>
<dbReference type="eggNOG" id="KOG0817">
    <property type="taxonomic scope" value="Eukaryota"/>
</dbReference>
<dbReference type="HOGENOM" id="CLU_118853_4_1_1"/>
<dbReference type="InParanoid" id="Q5VRM0"/>
<dbReference type="OMA" id="YFYKYYK"/>
<dbReference type="OrthoDB" id="346910at2759"/>
<dbReference type="Proteomes" id="UP000000763">
    <property type="component" value="Chromosome 6"/>
</dbReference>
<dbReference type="Proteomes" id="UP000007752">
    <property type="component" value="Chromosome 6"/>
</dbReference>
<dbReference type="Proteomes" id="UP000059680">
    <property type="component" value="Chromosome 6"/>
</dbReference>
<dbReference type="GO" id="GO:0005829">
    <property type="term" value="C:cytosol"/>
    <property type="evidence" value="ECO:0007669"/>
    <property type="project" value="UniProtKB-SubCell"/>
</dbReference>
<dbReference type="GO" id="GO:0000062">
    <property type="term" value="F:fatty-acyl-CoA binding"/>
    <property type="evidence" value="ECO:0000318"/>
    <property type="project" value="GO_Central"/>
</dbReference>
<dbReference type="GO" id="GO:0006631">
    <property type="term" value="P:fatty acid metabolic process"/>
    <property type="evidence" value="ECO:0000318"/>
    <property type="project" value="GO_Central"/>
</dbReference>
<dbReference type="FunFam" id="1.20.80.10:FF:000010">
    <property type="entry name" value="Acyl-CoA-binding domain-containing protein 5"/>
    <property type="match status" value="1"/>
</dbReference>
<dbReference type="Gene3D" id="1.20.80.10">
    <property type="match status" value="1"/>
</dbReference>
<dbReference type="InterPro" id="IPR000582">
    <property type="entry name" value="Acyl-CoA-binding_protein"/>
</dbReference>
<dbReference type="InterPro" id="IPR035984">
    <property type="entry name" value="Acyl-CoA-binding_sf"/>
</dbReference>
<dbReference type="InterPro" id="IPR014352">
    <property type="entry name" value="FERM/acyl-CoA-bd_prot_sf"/>
</dbReference>
<dbReference type="PANTHER" id="PTHR23310:SF135">
    <property type="entry name" value="ACYL-COA-BINDING DOMAIN-CONTAINING PROTEIN 2"/>
    <property type="match status" value="1"/>
</dbReference>
<dbReference type="PANTHER" id="PTHR23310">
    <property type="entry name" value="ACYL-COA-BINDING PROTEIN, ACBP"/>
    <property type="match status" value="1"/>
</dbReference>
<dbReference type="Pfam" id="PF00887">
    <property type="entry name" value="ACBP"/>
    <property type="match status" value="1"/>
</dbReference>
<dbReference type="PRINTS" id="PR00689">
    <property type="entry name" value="ACOABINDINGP"/>
</dbReference>
<dbReference type="SUPFAM" id="SSF47027">
    <property type="entry name" value="Acyl-CoA binding protein"/>
    <property type="match status" value="1"/>
</dbReference>
<dbReference type="PROSITE" id="PS51228">
    <property type="entry name" value="ACB_2"/>
    <property type="match status" value="1"/>
</dbReference>
<organism>
    <name type="scientific">Oryza sativa subsp. japonica</name>
    <name type="common">Rice</name>
    <dbReference type="NCBI Taxonomy" id="39947"/>
    <lineage>
        <taxon>Eukaryota</taxon>
        <taxon>Viridiplantae</taxon>
        <taxon>Streptophyta</taxon>
        <taxon>Embryophyta</taxon>
        <taxon>Tracheophyta</taxon>
        <taxon>Spermatophyta</taxon>
        <taxon>Magnoliopsida</taxon>
        <taxon>Liliopsida</taxon>
        <taxon>Poales</taxon>
        <taxon>Poaceae</taxon>
        <taxon>BOP clade</taxon>
        <taxon>Oryzoideae</taxon>
        <taxon>Oryzeae</taxon>
        <taxon>Oryzinae</taxon>
        <taxon>Oryza</taxon>
        <taxon>Oryza sativa</taxon>
    </lineage>
</organism>
<accession>Q5VRM0</accession>
<evidence type="ECO:0000250" key="1">
    <source>
        <dbReference type="UniProtKB" id="P07107"/>
    </source>
</evidence>
<evidence type="ECO:0000255" key="2">
    <source>
        <dbReference type="PROSITE-ProRule" id="PRU00573"/>
    </source>
</evidence>
<evidence type="ECO:0000269" key="3">
    <source>
    </source>
</evidence>
<evidence type="ECO:0000269" key="4">
    <source>
    </source>
</evidence>
<evidence type="ECO:0000269" key="5">
    <source>
    </source>
</evidence>
<evidence type="ECO:0000303" key="6">
    <source>
    </source>
</evidence>
<evidence type="ECO:0000305" key="7"/>
<evidence type="ECO:0000312" key="8">
    <source>
        <dbReference type="EMBL" id="BAD67765.1"/>
    </source>
</evidence>
<evidence type="ECO:0000312" key="9">
    <source>
        <dbReference type="EMBL" id="BAD67905.1"/>
    </source>
</evidence>
<evidence type="ECO:0000312" key="10">
    <source>
        <dbReference type="EMBL" id="BAF18525.1"/>
    </source>
</evidence>
<evidence type="ECO:0000312" key="11">
    <source>
        <dbReference type="EMBL" id="EAZ35610.1"/>
    </source>
</evidence>
<evidence type="ECO:0007829" key="12">
    <source>
        <dbReference type="PDB" id="5H3I"/>
    </source>
</evidence>
<reference key="1">
    <citation type="journal article" date="2005" name="Nature">
        <title>The map-based sequence of the rice genome.</title>
        <authorList>
            <consortium name="International rice genome sequencing project (IRGSP)"/>
        </authorList>
    </citation>
    <scope>NUCLEOTIDE SEQUENCE [LARGE SCALE GENOMIC DNA]</scope>
    <source>
        <strain>cv. Nipponbare</strain>
    </source>
</reference>
<reference key="2">
    <citation type="journal article" date="2008" name="Nucleic Acids Res.">
        <title>The rice annotation project database (RAP-DB): 2008 update.</title>
        <authorList>
            <consortium name="The rice annotation project (RAP)"/>
        </authorList>
    </citation>
    <scope>GENOME REANNOTATION</scope>
    <source>
        <strain>cv. Nipponbare</strain>
    </source>
</reference>
<reference key="3">
    <citation type="journal article" date="2013" name="Rice">
        <title>Improvement of the Oryza sativa Nipponbare reference genome using next generation sequence and optical map data.</title>
        <authorList>
            <person name="Kawahara Y."/>
            <person name="de la Bastide M."/>
            <person name="Hamilton J.P."/>
            <person name="Kanamori H."/>
            <person name="McCombie W.R."/>
            <person name="Ouyang S."/>
            <person name="Schwartz D.C."/>
            <person name="Tanaka T."/>
            <person name="Wu J."/>
            <person name="Zhou S."/>
            <person name="Childs K.L."/>
            <person name="Davidson R.M."/>
            <person name="Lin H."/>
            <person name="Quesada-Ocampo L."/>
            <person name="Vaillancourt B."/>
            <person name="Sakai H."/>
            <person name="Lee S.S."/>
            <person name="Kim J."/>
            <person name="Numa H."/>
            <person name="Itoh T."/>
            <person name="Buell C.R."/>
            <person name="Matsumoto T."/>
        </authorList>
    </citation>
    <scope>GENOME REANNOTATION</scope>
    <source>
        <strain>cv. Nipponbare</strain>
    </source>
</reference>
<reference key="4">
    <citation type="journal article" date="2005" name="PLoS Biol.">
        <title>The genomes of Oryza sativa: a history of duplications.</title>
        <authorList>
            <person name="Yu J."/>
            <person name="Wang J."/>
            <person name="Lin W."/>
            <person name="Li S."/>
            <person name="Li H."/>
            <person name="Zhou J."/>
            <person name="Ni P."/>
            <person name="Dong W."/>
            <person name="Hu S."/>
            <person name="Zeng C."/>
            <person name="Zhang J."/>
            <person name="Zhang Y."/>
            <person name="Li R."/>
            <person name="Xu Z."/>
            <person name="Li S."/>
            <person name="Li X."/>
            <person name="Zheng H."/>
            <person name="Cong L."/>
            <person name="Lin L."/>
            <person name="Yin J."/>
            <person name="Geng J."/>
            <person name="Li G."/>
            <person name="Shi J."/>
            <person name="Liu J."/>
            <person name="Lv H."/>
            <person name="Li J."/>
            <person name="Wang J."/>
            <person name="Deng Y."/>
            <person name="Ran L."/>
            <person name="Shi X."/>
            <person name="Wang X."/>
            <person name="Wu Q."/>
            <person name="Li C."/>
            <person name="Ren X."/>
            <person name="Wang J."/>
            <person name="Wang X."/>
            <person name="Li D."/>
            <person name="Liu D."/>
            <person name="Zhang X."/>
            <person name="Ji Z."/>
            <person name="Zhao W."/>
            <person name="Sun Y."/>
            <person name="Zhang Z."/>
            <person name="Bao J."/>
            <person name="Han Y."/>
            <person name="Dong L."/>
            <person name="Ji J."/>
            <person name="Chen P."/>
            <person name="Wu S."/>
            <person name="Liu J."/>
            <person name="Xiao Y."/>
            <person name="Bu D."/>
            <person name="Tan J."/>
            <person name="Yang L."/>
            <person name="Ye C."/>
            <person name="Zhang J."/>
            <person name="Xu J."/>
            <person name="Zhou Y."/>
            <person name="Yu Y."/>
            <person name="Zhang B."/>
            <person name="Zhuang S."/>
            <person name="Wei H."/>
            <person name="Liu B."/>
            <person name="Lei M."/>
            <person name="Yu H."/>
            <person name="Li Y."/>
            <person name="Xu H."/>
            <person name="Wei S."/>
            <person name="He X."/>
            <person name="Fang L."/>
            <person name="Zhang Z."/>
            <person name="Zhang Y."/>
            <person name="Huang X."/>
            <person name="Su Z."/>
            <person name="Tong W."/>
            <person name="Li J."/>
            <person name="Tong Z."/>
            <person name="Li S."/>
            <person name="Ye J."/>
            <person name="Wang L."/>
            <person name="Fang L."/>
            <person name="Lei T."/>
            <person name="Chen C.-S."/>
            <person name="Chen H.-C."/>
            <person name="Xu Z."/>
            <person name="Li H."/>
            <person name="Huang H."/>
            <person name="Zhang F."/>
            <person name="Xu H."/>
            <person name="Li N."/>
            <person name="Zhao C."/>
            <person name="Li S."/>
            <person name="Dong L."/>
            <person name="Huang Y."/>
            <person name="Li L."/>
            <person name="Xi Y."/>
            <person name="Qi Q."/>
            <person name="Li W."/>
            <person name="Zhang B."/>
            <person name="Hu W."/>
            <person name="Zhang Y."/>
            <person name="Tian X."/>
            <person name="Jiao Y."/>
            <person name="Liang X."/>
            <person name="Jin J."/>
            <person name="Gao L."/>
            <person name="Zheng W."/>
            <person name="Hao B."/>
            <person name="Liu S.-M."/>
            <person name="Wang W."/>
            <person name="Yuan L."/>
            <person name="Cao M."/>
            <person name="McDermott J."/>
            <person name="Samudrala R."/>
            <person name="Wang J."/>
            <person name="Wong G.K.-S."/>
            <person name="Yang H."/>
        </authorList>
    </citation>
    <scope>NUCLEOTIDE SEQUENCE [LARGE SCALE GENOMIC DNA]</scope>
    <source>
        <strain>cv. Nipponbare</strain>
    </source>
</reference>
<reference key="5">
    <citation type="journal article" date="2003" name="Science">
        <title>Collection, mapping, and annotation of over 28,000 cDNA clones from japonica rice.</title>
        <authorList>
            <consortium name="The rice full-length cDNA consortium"/>
        </authorList>
    </citation>
    <scope>NUCLEOTIDE SEQUENCE [LARGE SCALE MRNA]</scope>
    <source>
        <strain>cv. Nipponbare</strain>
    </source>
</reference>
<reference key="6">
    <citation type="journal article" date="2011" name="New Phytol.">
        <title>The rice acyl-CoA-binding protein gene family: phylogeny, expression and functional analysis.</title>
        <authorList>
            <person name="Meng W."/>
            <person name="Su Y.C."/>
            <person name="Saunders R.M."/>
            <person name="Chye M.L."/>
        </authorList>
    </citation>
    <scope>FUNCTION</scope>
    <scope>TISSUE SPECIFICITY</scope>
    <scope>INDUCTION</scope>
    <scope>GENE FAMILY</scope>
    <scope>NOMENCLATURE</scope>
</reference>
<reference key="7">
    <citation type="journal article" date="2014" name="New Phytol.">
        <title>Subcellular localization of rice acyl-CoA-binding proteins (ACBPs) indicates that OsACBP6::GFP is targeted to the peroxisomes.</title>
        <authorList>
            <person name="Meng W."/>
            <person name="Hsiao A.S."/>
            <person name="Gao C."/>
            <person name="Jiang L."/>
            <person name="Chye M.L."/>
        </authorList>
    </citation>
    <scope>FUNCTION</scope>
    <scope>SUBCELLULAR LOCATION</scope>
</reference>
<reference key="8">
    <citation type="journal article" date="2017" name="Acta Crystallogr. D">
        <title>The first plant acyl-CoA-binding protein structures: the close homologues OsACBP1 and OsACBP2 from rice.</title>
        <authorList>
            <person name="Guo Z.H."/>
            <person name="Chan W.H.Y."/>
            <person name="Kong G.K.W."/>
            <person name="Hao Q."/>
            <person name="Chye M.L."/>
        </authorList>
    </citation>
    <scope>X-RAY CRYSTALLOGRAPHY (2.30 ANGSTROMS)</scope>
    <scope>FUNCTION</scope>
</reference>
<sequence length="91" mass="10249">MGLQEEFEEFAEKAKTLPDTISNEDKLLLYGLYKQATVGPVTTGRPGIFNLKDRYKWDAWKAVEGKSKEEAMADYITKVKQLLEEASASTS</sequence>
<proteinExistence type="evidence at protein level"/>
<comment type="function">
    <text evidence="3 4 5">Binds medium- and long-chain acyl-CoA esters with high affinity. Can interact in vitro with linolenoyl-CoA (PubMed:21128943). Binds palmitoyl-CoA and linoleoyl-CoA in vitro (PubMed:28471368). Binds phosphatidic acid (PA) and phosphatidylcholine (PC) in vitro. May play a role in the biosynthesis of phospholipids (PubMed:24738983).</text>
</comment>
<comment type="subcellular location">
    <subcellularLocation>
        <location evidence="4">Cytoplasm</location>
        <location evidence="4">Cytosol</location>
    </subcellularLocation>
</comment>
<comment type="tissue specificity">
    <text evidence="3">Highly expressed in leaves. Expressed at low levels in roots and seeds.</text>
</comment>
<comment type="induction">
    <text evidence="3">Down-regulated by cold stress, wounding and infection with the rice blast fungus Magnaporthe oryzae.</text>
</comment>
<comment type="similarity">
    <text evidence="7">Belongs to the ACBP family.</text>
</comment>
<keyword id="KW-0002">3D-structure</keyword>
<keyword id="KW-0963">Cytoplasm</keyword>
<keyword id="KW-0446">Lipid-binding</keyword>
<keyword id="KW-1185">Reference proteome</keyword>